<organism>
    <name type="scientific">Schizosaccharomyces pombe (strain 972 / ATCC 24843)</name>
    <name type="common">Fission yeast</name>
    <dbReference type="NCBI Taxonomy" id="284812"/>
    <lineage>
        <taxon>Eukaryota</taxon>
        <taxon>Fungi</taxon>
        <taxon>Dikarya</taxon>
        <taxon>Ascomycota</taxon>
        <taxon>Taphrinomycotina</taxon>
        <taxon>Schizosaccharomycetes</taxon>
        <taxon>Schizosaccharomycetales</taxon>
        <taxon>Schizosaccharomycetaceae</taxon>
        <taxon>Schizosaccharomyces</taxon>
    </lineage>
</organism>
<accession>B5BP48</accession>
<feature type="chain" id="PRO_0000415922" description="Putative alpha-ketoglutarate-dependent sulfonate dioxygenase">
    <location>
        <begin position="1"/>
        <end position="391"/>
    </location>
</feature>
<feature type="binding site" evidence="1">
    <location>
        <position position="204"/>
    </location>
    <ligand>
        <name>Fe cation</name>
        <dbReference type="ChEBI" id="CHEBI:24875"/>
        <note>catalytic</note>
    </ligand>
</feature>
<feature type="binding site" evidence="1">
    <location>
        <position position="206"/>
    </location>
    <ligand>
        <name>Fe cation</name>
        <dbReference type="ChEBI" id="CHEBI:24875"/>
        <note>catalytic</note>
    </ligand>
</feature>
<feature type="binding site" evidence="1">
    <location>
        <position position="231"/>
    </location>
    <ligand>
        <name>2-oxoglutarate</name>
        <dbReference type="ChEBI" id="CHEBI:16810"/>
    </ligand>
</feature>
<feature type="binding site" evidence="1">
    <location>
        <position position="338"/>
    </location>
    <ligand>
        <name>2-oxoglutarate</name>
        <dbReference type="ChEBI" id="CHEBI:16810"/>
    </ligand>
</feature>
<feature type="binding site" evidence="1">
    <location>
        <position position="353"/>
    </location>
    <ligand>
        <name>Fe cation</name>
        <dbReference type="ChEBI" id="CHEBI:24875"/>
        <note>catalytic</note>
    </ligand>
</feature>
<feature type="binding site" evidence="1">
    <location>
        <position position="364"/>
    </location>
    <ligand>
        <name>2-oxoglutarate</name>
        <dbReference type="ChEBI" id="CHEBI:16810"/>
    </ligand>
</feature>
<feature type="binding site" evidence="1">
    <location>
        <position position="368"/>
    </location>
    <ligand>
        <name>2-oxoglutarate</name>
        <dbReference type="ChEBI" id="CHEBI:16810"/>
    </ligand>
</feature>
<dbReference type="EC" id="1.14.11.-"/>
<dbReference type="EMBL" id="AB325691">
    <property type="protein sequence ID" value="BAG68904.1"/>
    <property type="molecule type" value="Genomic_DNA"/>
</dbReference>
<dbReference type="SMR" id="B5BP48"/>
<dbReference type="FunCoup" id="B5BP48">
    <property type="interactions" value="381"/>
</dbReference>
<dbReference type="STRING" id="284812.B5BP48"/>
<dbReference type="iPTMnet" id="B5BP48"/>
<dbReference type="PaxDb" id="4896-SPBC460.04c.1"/>
<dbReference type="EnsemblFungi" id="SPBC460.04c.1">
    <property type="protein sequence ID" value="SPBC460.04c.1:pep"/>
    <property type="gene ID" value="SPBC460.04c"/>
</dbReference>
<dbReference type="PomBase" id="SPBC460.04c"/>
<dbReference type="VEuPathDB" id="FungiDB:SPBC460.04c"/>
<dbReference type="eggNOG" id="ENOG502QT05">
    <property type="taxonomic scope" value="Eukaryota"/>
</dbReference>
<dbReference type="HOGENOM" id="CLU_036005_0_1_1"/>
<dbReference type="InParanoid" id="B5BP48"/>
<dbReference type="OMA" id="DGWHTDV"/>
<dbReference type="UniPathway" id="UPA00338"/>
<dbReference type="PRO" id="PR:B5BP48"/>
<dbReference type="GO" id="GO:0005737">
    <property type="term" value="C:cytoplasm"/>
    <property type="evidence" value="ECO:0000318"/>
    <property type="project" value="GO_Central"/>
</dbReference>
<dbReference type="GO" id="GO:0016706">
    <property type="term" value="F:2-oxoglutarate-dependent dioxygenase activity"/>
    <property type="evidence" value="ECO:0000318"/>
    <property type="project" value="GO_Central"/>
</dbReference>
<dbReference type="GO" id="GO:0046872">
    <property type="term" value="F:metal ion binding"/>
    <property type="evidence" value="ECO:0007669"/>
    <property type="project" value="UniProtKB-KW"/>
</dbReference>
<dbReference type="GO" id="GO:0000907">
    <property type="term" value="F:sulfonate dioxygenase activity"/>
    <property type="evidence" value="ECO:0000266"/>
    <property type="project" value="PomBase"/>
</dbReference>
<dbReference type="GO" id="GO:0046306">
    <property type="term" value="P:alkanesulfonate catabolic process"/>
    <property type="evidence" value="ECO:0007669"/>
    <property type="project" value="UniProtKB-UniPathway"/>
</dbReference>
<dbReference type="FunFam" id="3.60.130.10:FF:000008">
    <property type="entry name" value="Alpha-ketoglutarate-dependent taurine dioxygenase"/>
    <property type="match status" value="1"/>
</dbReference>
<dbReference type="Gene3D" id="3.60.130.10">
    <property type="entry name" value="Clavaminate synthase-like"/>
    <property type="match status" value="1"/>
</dbReference>
<dbReference type="InterPro" id="IPR051323">
    <property type="entry name" value="AtsK-like"/>
</dbReference>
<dbReference type="InterPro" id="IPR042098">
    <property type="entry name" value="TauD-like_sf"/>
</dbReference>
<dbReference type="InterPro" id="IPR003819">
    <property type="entry name" value="TauD/TfdA-like"/>
</dbReference>
<dbReference type="PANTHER" id="PTHR30468">
    <property type="entry name" value="ALPHA-KETOGLUTARATE-DEPENDENT SULFONATE DIOXYGENASE"/>
    <property type="match status" value="1"/>
</dbReference>
<dbReference type="PANTHER" id="PTHR30468:SF31">
    <property type="entry name" value="ALPHA-KETOGLUTARATE-DEPENDENT SULFONATE DIOXYGENASE-RELATED"/>
    <property type="match status" value="1"/>
</dbReference>
<dbReference type="Pfam" id="PF02668">
    <property type="entry name" value="TauD"/>
    <property type="match status" value="1"/>
</dbReference>
<dbReference type="SUPFAM" id="SSF51197">
    <property type="entry name" value="Clavaminate synthase-like"/>
    <property type="match status" value="1"/>
</dbReference>
<evidence type="ECO:0000250" key="1"/>
<evidence type="ECO:0000305" key="2"/>
<proteinExistence type="inferred from homology"/>
<gene>
    <name type="ORF">SPBC460.04c</name>
</gene>
<keyword id="KW-0223">Dioxygenase</keyword>
<keyword id="KW-0408">Iron</keyword>
<keyword id="KW-0479">Metal-binding</keyword>
<keyword id="KW-0560">Oxidoreductase</keyword>
<comment type="function">
    <text evidence="1">Acts as an alpha-ketoglutarate-dependent dioxygenase active on sulfonates.</text>
</comment>
<comment type="cofactor">
    <cofactor evidence="1">
        <name>Fe(2+)</name>
        <dbReference type="ChEBI" id="CHEBI:29033"/>
    </cofactor>
    <text evidence="1">Binds 1 Fe(2+) ion per subunit.</text>
</comment>
<comment type="pathway">
    <text>Organosulfur degradation; alkanesulfonate degradation.</text>
</comment>
<comment type="similarity">
    <text evidence="2">Belongs to the TfdA dioxygenase family.</text>
</comment>
<name>YP54_SCHPO</name>
<reference key="1">
    <citation type="journal article" date="2008" name="Yeast">
        <title>The gap-filling sequence on the left arm of chromosome 2 in fission yeast Schizosaccharomyces pombe.</title>
        <authorList>
            <person name="Sasaki M."/>
            <person name="Idiris A."/>
            <person name="Tada A."/>
            <person name="Kumagai H."/>
            <person name="Giga-Hama Y."/>
            <person name="Tohda H."/>
        </authorList>
    </citation>
    <scope>NUCLEOTIDE SEQUENCE [LARGE SCALE GENOMIC DNA]</scope>
    <source>
        <strain>972 / ATCC 24843</strain>
    </source>
</reference>
<protein>
    <recommendedName>
        <fullName>Putative alpha-ketoglutarate-dependent sulfonate dioxygenase</fullName>
        <ecNumber>1.14.11.-</ecNumber>
    </recommendedName>
</protein>
<sequence>MATLTETISKADKHDEKLTDFQYSKKIFNGVHEVEDDKQRTDFTTVRFGDVEKKFAVPKDYKYKNVLPTFPNAVYNLTGELAFEDKGLLADPKFSNLLKDVTKVEHLARDLGTVLYGIQLSKLNDAQKNELARYIAERGVVYFPDQEQTLEEFQELGQYYGHSHKHGSNSRPFEDKFAEFQVVYSDRFSPYDQHAKNNSLRYWHSDVSFEKQPSAQTFFKALTVPEQGGDTLFISGYAAYEALSTPLKKYLEGLTVVHSGKEQSEYHRRSGQHVRLDGDTNAHPIVRTHPVTGWKSLFISPGFTRYIPGIPRGESDAILDYLYQHIANLSQSTVRIKWTSNGVAAWDNRIVIHRATYDHLPQTRHLVRIAAQGEVPFFDANSHERSEDLRE</sequence>